<comment type="function">
    <text evidence="2 3">Transports viral genome to neighboring plant cells directly through plasmosdesmata, without any budding. The movement protein allows efficient cell to cell propagation, by bypassing the host cell wall barrier. Forms a ribonucleoprotein complex with viral RNA. Binds microtubules and modulates microtubule stability. Can bind double-stranded DNA. Triggers host hypersensitive defense reaction in incompatible plants harboring resistance (R) proteins.</text>
</comment>
<comment type="subunit">
    <text evidence="1 2 3">Binds to host RBCS at the plasmodesmata; this interaction seems required for viral systemic movement (By similarity). In resistant plants, interacts with host MBP2C at host microtubules; this interaction prevents virus cell to cell movement. In resistant plants, interacts with host resistance (R) protein (e.g. tomato ToMV resistance protein TM-2(2), AC Q71BG9) at the host plasma membrane; this interaction triggers host defense responses leading to programmed cell death (By similarity).</text>
</comment>
<comment type="subcellular location">
    <subcellularLocation>
        <location evidence="3">Host cytoplasm</location>
        <location evidence="3">Host cytoskeleton</location>
    </subcellularLocation>
    <subcellularLocation>
        <location evidence="3">Host cell junction</location>
        <location evidence="3">Host plasmodesma</location>
    </subcellularLocation>
    <text evidence="2 3">Binds to the host cytoskeleton before being transported to the host plasmodesmata. Observed in virus replication complexes (VRCs) of tobamovirus infected host cells (By similarity). In resistant plants, targeted to the host plasma membrane via the interaction with host resistance (R) protein TM-2 (e.g. tomato ToMV resistance protein TM-2(2), AC Q71BG9) (By similarity).</text>
</comment>
<comment type="similarity">
    <text evidence="5">Belongs to the tobamovirus movement protein family.</text>
</comment>
<proteinExistence type="inferred from homology"/>
<organismHost>
    <name type="scientific">Nicotiana tabacum</name>
    <name type="common">Common tobacco</name>
    <dbReference type="NCBI Taxonomy" id="4097"/>
</organismHost>
<feature type="chain" id="PRO_0000041158" description="Movement protein">
    <location>
        <begin position="1"/>
        <end position="268"/>
    </location>
</feature>
<feature type="chain" id="PRO_0000041159" description="27.9 kDa protein">
    <location>
        <begin position="20"/>
        <end position="268"/>
    </location>
</feature>
<feature type="chain" id="PRO_0000041160" description="25.3 kDa protein">
    <location>
        <begin position="43"/>
        <end position="268"/>
    </location>
</feature>
<feature type="chain" id="PRO_0000041161" description="19.5 kDa protein">
    <location>
        <begin position="97"/>
        <end position="268"/>
    </location>
</feature>
<feature type="region of interest" description="Disordered" evidence="4">
    <location>
        <begin position="218"/>
        <end position="246"/>
    </location>
</feature>
<feature type="compositionally biased region" description="Polar residues" evidence="4">
    <location>
        <begin position="225"/>
        <end position="237"/>
    </location>
</feature>
<gene>
    <name type="primary">MP</name>
    <name type="synonym">MP30</name>
</gene>
<evidence type="ECO:0000250" key="1">
    <source>
        <dbReference type="UniProtKB" id="A0A0S4IJL0"/>
    </source>
</evidence>
<evidence type="ECO:0000250" key="2">
    <source>
        <dbReference type="UniProtKB" id="P03583"/>
    </source>
</evidence>
<evidence type="ECO:0000250" key="3">
    <source>
        <dbReference type="UniProtKB" id="P69513"/>
    </source>
</evidence>
<evidence type="ECO:0000256" key="4">
    <source>
        <dbReference type="SAM" id="MobiDB-lite"/>
    </source>
</evidence>
<evidence type="ECO:0000305" key="5"/>
<reference key="1">
    <citation type="journal article" date="1982" name="J. Biochem.">
        <title>Nucleotide sequence and its character of cistron coding for the 30 K protein of tobacco mosaic virus (OM strain).</title>
        <authorList>
            <person name="Meshi T."/>
            <person name="Ohno T."/>
            <person name="Okada Y."/>
        </authorList>
    </citation>
    <scope>NUCLEOTIDE SEQUENCE [GENOMIC RNA]</scope>
</reference>
<dbReference type="EMBL" id="J02412">
    <property type="status" value="NOT_ANNOTATED_CDS"/>
    <property type="molecule type" value="Genomic_RNA"/>
</dbReference>
<dbReference type="EMBL" id="V01407">
    <property type="protein sequence ID" value="CAA24686.1"/>
    <property type="molecule type" value="Genomic_DNA"/>
</dbReference>
<dbReference type="PIR" id="A91965">
    <property type="entry name" value="WMTM30"/>
</dbReference>
<dbReference type="GO" id="GO:0030430">
    <property type="term" value="C:host cell cytoplasm"/>
    <property type="evidence" value="ECO:0007669"/>
    <property type="project" value="UniProtKB-KW"/>
</dbReference>
<dbReference type="GO" id="GO:0044219">
    <property type="term" value="C:host cell plasmodesma"/>
    <property type="evidence" value="ECO:0007669"/>
    <property type="project" value="UniProtKB-SubCell"/>
</dbReference>
<dbReference type="GO" id="GO:0044163">
    <property type="term" value="C:host cytoskeleton"/>
    <property type="evidence" value="ECO:0000250"/>
    <property type="project" value="UniProtKB"/>
</dbReference>
<dbReference type="GO" id="GO:0003690">
    <property type="term" value="F:double-stranded DNA binding"/>
    <property type="evidence" value="ECO:0000250"/>
    <property type="project" value="UniProtKB"/>
</dbReference>
<dbReference type="GO" id="GO:0003723">
    <property type="term" value="F:RNA binding"/>
    <property type="evidence" value="ECO:0007669"/>
    <property type="project" value="UniProtKB-KW"/>
</dbReference>
<dbReference type="GO" id="GO:0046740">
    <property type="term" value="P:transport of virus in host, cell to cell"/>
    <property type="evidence" value="ECO:0007669"/>
    <property type="project" value="UniProtKB-KW"/>
</dbReference>
<dbReference type="InterPro" id="IPR001022">
    <property type="entry name" value="TMV_movement"/>
</dbReference>
<dbReference type="InterPro" id="IPR028919">
    <property type="entry name" value="Viral_movement"/>
</dbReference>
<dbReference type="Pfam" id="PF01107">
    <property type="entry name" value="MP"/>
    <property type="match status" value="1"/>
</dbReference>
<dbReference type="PRINTS" id="PR00964">
    <property type="entry name" value="MOVEMENT"/>
</dbReference>
<organism>
    <name type="scientific">Tobacco mosaic virus (strain OM)</name>
    <name type="common">TMV</name>
    <dbReference type="NCBI Taxonomy" id="12251"/>
    <lineage>
        <taxon>Viruses</taxon>
        <taxon>Riboviria</taxon>
        <taxon>Orthornavirae</taxon>
        <taxon>Kitrinoviricota</taxon>
        <taxon>Alsuviricetes</taxon>
        <taxon>Martellivirales</taxon>
        <taxon>Virgaviridae</taxon>
        <taxon>Tobamovirus</taxon>
        <taxon>Tobacco mosaic virus</taxon>
    </lineage>
</organism>
<accession>P03582</accession>
<keyword id="KW-0165">Cleavage on pair of basic residues</keyword>
<keyword id="KW-1031">Host cell junction</keyword>
<keyword id="KW-1035">Host cytoplasm</keyword>
<keyword id="KW-1037">Host cytoskeleton</keyword>
<keyword id="KW-0945">Host-virus interaction</keyword>
<keyword id="KW-0694">RNA-binding</keyword>
<keyword id="KW-0813">Transport</keyword>
<keyword id="KW-0916">Viral movement protein</keyword>
<sequence>MALVVKGKVNINEFIDLTKMEKILPSMFTPVKSVMCSKVDKIMVHENESLSEVNLLKGVKLIDSGYVCLAGLVVTGEWNLPDNCRGGVSVCLVDKRMERADEATLGSYYTAAAKKRFQFKVVPNYAITTQDAMKNVWQVLVNIRNVKMSAGFCPLSLEFVSVCIVYRNNIKLGLREKITSVRDGGPMELTEEVVDEFMEDVPMSIRLAKFRSRTGKKSDVRKGKISSSDRSAPNKNYRNVKDFGGMSFKKNNLIDDDSETTVAESDSF</sequence>
<protein>
    <recommendedName>
        <fullName>Movement protein</fullName>
    </recommendedName>
    <alternativeName>
        <fullName>30 kDa protein</fullName>
    </alternativeName>
    <alternativeName>
        <fullName>Cell-to-cell transport protein</fullName>
    </alternativeName>
    <component>
        <recommendedName>
            <fullName>27.9 kDa protein</fullName>
        </recommendedName>
    </component>
    <component>
        <recommendedName>
            <fullName>25.3 kDa protein</fullName>
        </recommendedName>
    </component>
    <component>
        <recommendedName>
            <fullName>19.5 kDa protein</fullName>
        </recommendedName>
    </component>
</protein>
<name>MVP_TMVOM</name>